<accession>Q865W5</accession>
<protein>
    <recommendedName>
        <fullName>Interleukin-13</fullName>
        <shortName>IL-13</shortName>
    </recommendedName>
</protein>
<evidence type="ECO:0000250" key="1"/>
<evidence type="ECO:0000250" key="2">
    <source>
        <dbReference type="UniProtKB" id="P20109"/>
    </source>
</evidence>
<evidence type="ECO:0000250" key="3">
    <source>
        <dbReference type="UniProtKB" id="P35225"/>
    </source>
</evidence>
<evidence type="ECO:0000250" key="4">
    <source>
        <dbReference type="UniProtKB" id="P42203"/>
    </source>
</evidence>
<evidence type="ECO:0000255" key="5"/>
<evidence type="ECO:0000305" key="6"/>
<feature type="signal peptide" evidence="5">
    <location>
        <begin position="1"/>
        <end position="18"/>
    </location>
</feature>
<feature type="chain" id="PRO_0000015546" description="Interleukin-13">
    <location>
        <begin position="19"/>
        <end position="136"/>
    </location>
</feature>
<feature type="glycosylation site" description="N-linked (GlcNAc...) asparagine" evidence="5">
    <location>
        <position position="38"/>
    </location>
</feature>
<feature type="glycosylation site" description="N-linked (GlcNAc...) asparagine" evidence="5">
    <location>
        <position position="49"/>
    </location>
</feature>
<feature type="glycosylation site" description="N-linked (GlcNAc...) asparagine" evidence="5">
    <location>
        <position position="57"/>
    </location>
</feature>
<feature type="glycosylation site" description="N-linked (GlcNAc...) asparagine" evidence="5">
    <location>
        <position position="72"/>
    </location>
</feature>
<feature type="glycosylation site" description="N-linked (GlcNAc...) asparagine" evidence="5">
    <location>
        <position position="75"/>
    </location>
</feature>
<feature type="glycosylation site" description="N-linked (GlcNAc...) asparagine" evidence="5">
    <location>
        <position position="131"/>
    </location>
</feature>
<feature type="disulfide bond" evidence="3">
    <location>
        <begin position="48"/>
        <end position="76"/>
    </location>
</feature>
<feature type="disulfide bond" evidence="3">
    <location>
        <begin position="64"/>
        <end position="90"/>
    </location>
</feature>
<proteinExistence type="evidence at transcript level"/>
<name>IL13_CAMBA</name>
<organism>
    <name type="scientific">Camelus bactrianus</name>
    <name type="common">Bactrian camel</name>
    <dbReference type="NCBI Taxonomy" id="9837"/>
    <lineage>
        <taxon>Eukaryota</taxon>
        <taxon>Metazoa</taxon>
        <taxon>Chordata</taxon>
        <taxon>Craniata</taxon>
        <taxon>Vertebrata</taxon>
        <taxon>Euteleostomi</taxon>
        <taxon>Mammalia</taxon>
        <taxon>Eutheria</taxon>
        <taxon>Laurasiatheria</taxon>
        <taxon>Artiodactyla</taxon>
        <taxon>Tylopoda</taxon>
        <taxon>Camelidae</taxon>
        <taxon>Camelus</taxon>
    </lineage>
</organism>
<keyword id="KW-0202">Cytokine</keyword>
<keyword id="KW-1015">Disulfide bond</keyword>
<keyword id="KW-0325">Glycoprotein</keyword>
<keyword id="KW-1185">Reference proteome</keyword>
<keyword id="KW-0964">Secreted</keyword>
<keyword id="KW-0732">Signal</keyword>
<gene>
    <name type="primary">IL13</name>
</gene>
<comment type="function">
    <text evidence="2 3 4">Cytokine that plays important roles in allergic inflammation and immune response to parasite infection. Synergizes with IL2 in regulating interferon-gamma synthesis. Stimulates B-cell proliferation, and activation of eosinophils, basophils, and mast cells (By similarity). Plays an important role in controlling IL33 activity by modulating the production of transmembrane and soluble forms of interleukin-1 receptor-like 1/IL1RL1 (By similarity). Displays the capacity to antagonize Th1-driven proinflammatory immune response and downregulates synthesis of many proinflammatory cytokines including IL1, IL6, IL10, IL12 and TNF-alpha through a mechanism that partially involves suppression of NF-kappa-B (By similarity). Also functions on nonhematopoietic cells, including endothelial cells where it induces vascular cell adhesion protein 1/VCAM1, which is important in the recruitment of eosinophils. Exerts its biological effects through its receptors which comprises the IL4R chain and the IL13RA1 chain, to activate JAK1 and TYK2, leading to the activation of STAT6. Aside from IL13RA1, another receptor IL13RA2 acts as a high affinity decoy for IL13 and mediates internalization and depletion of extracellular IL13 (By similarity).</text>
</comment>
<comment type="subunit">
    <text evidence="1">Interacts with IL13RA2.</text>
</comment>
<comment type="subcellular location">
    <subcellularLocation>
        <location>Secreted</location>
    </subcellularLocation>
</comment>
<comment type="similarity">
    <text evidence="6">Belongs to the IL-4/IL-13 family.</text>
</comment>
<reference key="1">
    <citation type="submission" date="2003-04" db="EMBL/GenBank/DDBJ databases">
        <title>Cloning and sequence analysis of cytokine cDNAs of llama and camel.</title>
        <authorList>
            <person name="Odbileg R."/>
            <person name="Lee S.-I."/>
            <person name="Yoshida R."/>
            <person name="Chang K.-S."/>
            <person name="Ohashi K."/>
            <person name="Sugimoto C."/>
            <person name="Onuma M."/>
        </authorList>
    </citation>
    <scope>NUCLEOTIDE SEQUENCE [MRNA]</scope>
</reference>
<dbReference type="EMBL" id="AB107658">
    <property type="protein sequence ID" value="BAC75395.1"/>
    <property type="molecule type" value="mRNA"/>
</dbReference>
<dbReference type="RefSeq" id="NP_001290450.1">
    <property type="nucleotide sequence ID" value="NM_001303521.1"/>
</dbReference>
<dbReference type="SMR" id="Q865W5"/>
<dbReference type="GlyCosmos" id="Q865W5">
    <property type="glycosylation" value="6 sites, No reported glycans"/>
</dbReference>
<dbReference type="GeneID" id="105082106"/>
<dbReference type="CTD" id="3596"/>
<dbReference type="OrthoDB" id="30165at91561"/>
<dbReference type="Proteomes" id="UP000694950">
    <property type="component" value="Unplaced"/>
</dbReference>
<dbReference type="GO" id="GO:0005615">
    <property type="term" value="C:extracellular space"/>
    <property type="evidence" value="ECO:0007669"/>
    <property type="project" value="UniProtKB-KW"/>
</dbReference>
<dbReference type="GO" id="GO:0005125">
    <property type="term" value="F:cytokine activity"/>
    <property type="evidence" value="ECO:0007669"/>
    <property type="project" value="UniProtKB-KW"/>
</dbReference>
<dbReference type="GO" id="GO:0005126">
    <property type="term" value="F:cytokine receptor binding"/>
    <property type="evidence" value="ECO:0007669"/>
    <property type="project" value="InterPro"/>
</dbReference>
<dbReference type="GO" id="GO:0006955">
    <property type="term" value="P:immune response"/>
    <property type="evidence" value="ECO:0007669"/>
    <property type="project" value="InterPro"/>
</dbReference>
<dbReference type="FunFam" id="1.20.1250.10:FF:000029">
    <property type="entry name" value="Interleukin-13"/>
    <property type="match status" value="1"/>
</dbReference>
<dbReference type="Gene3D" id="1.20.1250.10">
    <property type="match status" value="1"/>
</dbReference>
<dbReference type="InterPro" id="IPR009079">
    <property type="entry name" value="4_helix_cytokine-like_core"/>
</dbReference>
<dbReference type="InterPro" id="IPR020470">
    <property type="entry name" value="IL-13"/>
</dbReference>
<dbReference type="InterPro" id="IPR001325">
    <property type="entry name" value="IL-4/IL-13"/>
</dbReference>
<dbReference type="InterPro" id="IPR018096">
    <property type="entry name" value="IL-4/IL-13_CS"/>
</dbReference>
<dbReference type="PANTHER" id="PTHR48486">
    <property type="entry name" value="INTERLEUKIN-13"/>
    <property type="match status" value="1"/>
</dbReference>
<dbReference type="PANTHER" id="PTHR48486:SF1">
    <property type="entry name" value="INTERLEUKIN-13"/>
    <property type="match status" value="1"/>
</dbReference>
<dbReference type="Pfam" id="PF03487">
    <property type="entry name" value="IL13"/>
    <property type="match status" value="1"/>
</dbReference>
<dbReference type="PRINTS" id="PR01929">
    <property type="entry name" value="INTRLEUKIN13"/>
</dbReference>
<dbReference type="SMART" id="SM00190">
    <property type="entry name" value="IL4_13"/>
    <property type="match status" value="1"/>
</dbReference>
<dbReference type="SUPFAM" id="SSF47266">
    <property type="entry name" value="4-helical cytokines"/>
    <property type="match status" value="1"/>
</dbReference>
<dbReference type="PROSITE" id="PS00838">
    <property type="entry name" value="INTERLEUKIN_4_13"/>
    <property type="match status" value="1"/>
</dbReference>
<sequence>MALWLTVVIAFTCIGGLASPVPTPSPKALKELIEELVNITQNQKAPLCNGSMVWSINLTTSMYCAARESLINITNCSVIQRTQRMLNALCPHKLSAKVSSEHVRDTKIEVTQFIKTLLQHSRNVFHYRSFNWSKKS</sequence>